<proteinExistence type="evidence at transcript level"/>
<sequence>MDRVTRYPILGIPQAHRGTGLVLDGDTSYTYHLVCTGPEASGWGQDEPQTWPTDYKAQQGVLRQGVSYSVRAYPGQPSPRGLHLETGEDEGLKVYRLGARDAHQGRPTWAVHPEDGEDEEMKTYRLDAGDAVPRGLCDLERERWAIIQGQAVRKSGTVATLQAAPDHGDPRTPGPPRSTPLEENVVDREQIDFLAARQQFLSLEQANKEVPHSSPARGTPAGPSPGVSQAPKAFNKPHLVNGHVVPTKPQGKGVFREENKVRAVPAWASVQVADDPGSLAPVESPGTPKETPIEREIRLAQEREADLREQRGLRRAADHQELVEIPSRPLLTKVSLITAPRRERGRPSLYVQRDMVQETQREEDHRREGLHVGRASTPDWVSEDPQPGLRRALSSDSILSPDSILSPAPDARAADPAPEVRKVNRIPPDAYQPYLSPGTPQLEPSAFGAFSKPSGLSTVDTEAATSPKATMSPRHLSESSGKPMSTKQEPWKLPRGSPQANRGVVRWEYFRLRPLQFRAPDEPQQAQVPHVWGWEVAGAPALRLQKSQSSDLLERERESVLRREREVAEERRNALFPEVFSPTPDESCDQNSRSSSQASGITGSYSVSESPFFSPIRLHSSLAWTVEDPVDSAPPGQRKKEQWYAGINPSDGINSEVLEAIRVTRHKNTMAERWESRIYASEEDD</sequence>
<protein>
    <recommendedName>
        <fullName evidence="2">Mitotic interactor and substrate of PLK1</fullName>
    </recommendedName>
</protein>
<accession>Q5RBH3</accession>
<reference key="1">
    <citation type="submission" date="2004-11" db="EMBL/GenBank/DDBJ databases">
        <authorList>
            <consortium name="The German cDNA consortium"/>
        </authorList>
    </citation>
    <scope>NUCLEOTIDE SEQUENCE [LARGE SCALE MRNA]</scope>
    <source>
        <tissue>Kidney</tissue>
    </source>
</reference>
<keyword id="KW-0009">Actin-binding</keyword>
<keyword id="KW-0131">Cell cycle</keyword>
<keyword id="KW-0132">Cell division</keyword>
<keyword id="KW-0965">Cell junction</keyword>
<keyword id="KW-0175">Coiled coil</keyword>
<keyword id="KW-0963">Cytoplasm</keyword>
<keyword id="KW-0206">Cytoskeleton</keyword>
<keyword id="KW-0498">Mitosis</keyword>
<keyword id="KW-0597">Phosphoprotein</keyword>
<keyword id="KW-1185">Reference proteome</keyword>
<evidence type="ECO:0000250" key="1"/>
<evidence type="ECO:0000250" key="2">
    <source>
        <dbReference type="UniProtKB" id="Q8IVT2"/>
    </source>
</evidence>
<evidence type="ECO:0000255" key="3"/>
<evidence type="ECO:0000256" key="4">
    <source>
        <dbReference type="SAM" id="MobiDB-lite"/>
    </source>
</evidence>
<evidence type="ECO:0000305" key="5"/>
<organism>
    <name type="scientific">Pongo abelii</name>
    <name type="common">Sumatran orangutan</name>
    <name type="synonym">Pongo pygmaeus abelii</name>
    <dbReference type="NCBI Taxonomy" id="9601"/>
    <lineage>
        <taxon>Eukaryota</taxon>
        <taxon>Metazoa</taxon>
        <taxon>Chordata</taxon>
        <taxon>Craniata</taxon>
        <taxon>Vertebrata</taxon>
        <taxon>Euteleostomi</taxon>
        <taxon>Mammalia</taxon>
        <taxon>Eutheria</taxon>
        <taxon>Euarchontoglires</taxon>
        <taxon>Primates</taxon>
        <taxon>Haplorrhini</taxon>
        <taxon>Catarrhini</taxon>
        <taxon>Hominidae</taxon>
        <taxon>Pongo</taxon>
    </lineage>
</organism>
<feature type="chain" id="PRO_0000079383" description="Mitotic interactor and substrate of PLK1">
    <location>
        <begin position="1"/>
        <end position="685"/>
    </location>
</feature>
<feature type="region of interest" description="Disordered" evidence="4">
    <location>
        <begin position="155"/>
        <end position="181"/>
    </location>
</feature>
<feature type="region of interest" description="Disordered" evidence="4">
    <location>
        <begin position="207"/>
        <end position="253"/>
    </location>
</feature>
<feature type="region of interest" description="Disordered" evidence="4">
    <location>
        <begin position="345"/>
        <end position="499"/>
    </location>
</feature>
<feature type="region of interest" description="Disordered" evidence="4">
    <location>
        <begin position="575"/>
        <end position="607"/>
    </location>
</feature>
<feature type="region of interest" description="Disordered" evidence="4">
    <location>
        <begin position="629"/>
        <end position="651"/>
    </location>
</feature>
<feature type="coiled-coil region" evidence="3">
    <location>
        <begin position="551"/>
        <end position="575"/>
    </location>
</feature>
<feature type="compositionally biased region" description="Basic and acidic residues" evidence="4">
    <location>
        <begin position="355"/>
        <end position="371"/>
    </location>
</feature>
<feature type="compositionally biased region" description="Low complexity" evidence="4">
    <location>
        <begin position="392"/>
        <end position="417"/>
    </location>
</feature>
<feature type="compositionally biased region" description="Polar residues" evidence="4">
    <location>
        <begin position="454"/>
        <end position="469"/>
    </location>
</feature>
<feature type="compositionally biased region" description="Polar residues" evidence="4">
    <location>
        <begin position="478"/>
        <end position="488"/>
    </location>
</feature>
<feature type="compositionally biased region" description="Polar residues" evidence="4">
    <location>
        <begin position="589"/>
        <end position="607"/>
    </location>
</feature>
<feature type="modified residue" description="Phosphoserine; by CDK1" evidence="2">
    <location>
        <position position="78"/>
    </location>
</feature>
<feature type="modified residue" description="Phosphothreonine; by CDK1" evidence="2">
    <location>
        <position position="172"/>
    </location>
</feature>
<feature type="modified residue" description="Phosphothreonine" evidence="2">
    <location>
        <position position="179"/>
    </location>
</feature>
<feature type="modified residue" description="Phosphoserine; by CDK1" evidence="2">
    <location>
        <position position="214"/>
    </location>
</feature>
<feature type="modified residue" description="Phosphothreonine" evidence="2">
    <location>
        <position position="219"/>
    </location>
</feature>
<feature type="modified residue" description="Phosphoserine; by CDK1" evidence="2">
    <location>
        <position position="284"/>
    </location>
</feature>
<feature type="modified residue" description="Phosphothreonine; by CDK1" evidence="2">
    <location>
        <position position="287"/>
    </location>
</feature>
<feature type="modified residue" description="Phosphoserine" evidence="2">
    <location>
        <position position="348"/>
    </location>
</feature>
<feature type="modified residue" description="Phosphothreonine; by CDK1" evidence="2">
    <location>
        <position position="377"/>
    </location>
</feature>
<feature type="modified residue" description="Phosphoserine" evidence="2">
    <location>
        <position position="382"/>
    </location>
</feature>
<feature type="modified residue" description="Phosphoserine; by PLK1" evidence="2">
    <location>
        <position position="394"/>
    </location>
</feature>
<feature type="modified residue" description="Phosphoserine; by PLK1" evidence="2">
    <location>
        <position position="395"/>
    </location>
</feature>
<feature type="modified residue" description="Phosphoserine; by PLK1" evidence="2">
    <location>
        <position position="397"/>
    </location>
</feature>
<feature type="modified residue" description="Phosphoserine" evidence="2">
    <location>
        <position position="406"/>
    </location>
</feature>
<feature type="modified residue" description="Phosphoserine" evidence="2">
    <location>
        <position position="436"/>
    </location>
</feature>
<feature type="modified residue" description="Phosphoserine; by PLK1" evidence="2">
    <location>
        <position position="477"/>
    </location>
</feature>
<feature type="modified residue" description="Phosphoserine" evidence="2">
    <location>
        <position position="547"/>
    </location>
</feature>
<feature type="modified residue" description="Phosphoserine" evidence="2">
    <location>
        <position position="549"/>
    </location>
</feature>
<feature type="modified residue" description="Phosphoserine; by PLK1" evidence="2">
    <location>
        <position position="581"/>
    </location>
</feature>
<feature type="modified residue" description="Phosphothreonine" evidence="2">
    <location>
        <position position="583"/>
    </location>
</feature>
<feature type="modified residue" description="Phosphoserine; by PLK1" evidence="2">
    <location>
        <position position="592"/>
    </location>
</feature>
<feature type="modified residue" description="Phosphoserine" evidence="2">
    <location>
        <position position="681"/>
    </location>
</feature>
<name>MISP_PONAB</name>
<dbReference type="EMBL" id="CR858675">
    <property type="protein sequence ID" value="CAH90887.1"/>
    <property type="molecule type" value="mRNA"/>
</dbReference>
<dbReference type="RefSeq" id="NP_001125506.1">
    <property type="nucleotide sequence ID" value="NM_001132034.2"/>
</dbReference>
<dbReference type="RefSeq" id="XP_063575186.1">
    <property type="nucleotide sequence ID" value="XM_063719116.1"/>
</dbReference>
<dbReference type="SMR" id="Q5RBH3"/>
<dbReference type="FunCoup" id="Q5RBH3">
    <property type="interactions" value="447"/>
</dbReference>
<dbReference type="GeneID" id="100172415"/>
<dbReference type="KEGG" id="pon:100172415"/>
<dbReference type="CTD" id="126353"/>
<dbReference type="eggNOG" id="ENOG502RZZI">
    <property type="taxonomic scope" value="Eukaryota"/>
</dbReference>
<dbReference type="InParanoid" id="Q5RBH3"/>
<dbReference type="OrthoDB" id="9449914at2759"/>
<dbReference type="Proteomes" id="UP000001595">
    <property type="component" value="Unplaced"/>
</dbReference>
<dbReference type="GO" id="GO:0005884">
    <property type="term" value="C:actin filament"/>
    <property type="evidence" value="ECO:0000250"/>
    <property type="project" value="UniProtKB"/>
</dbReference>
<dbReference type="GO" id="GO:0005938">
    <property type="term" value="C:cell cortex"/>
    <property type="evidence" value="ECO:0007669"/>
    <property type="project" value="UniProtKB-SubCell"/>
</dbReference>
<dbReference type="GO" id="GO:0005925">
    <property type="term" value="C:focal adhesion"/>
    <property type="evidence" value="ECO:0007669"/>
    <property type="project" value="UniProtKB-SubCell"/>
</dbReference>
<dbReference type="GO" id="GO:0031616">
    <property type="term" value="C:spindle pole centrosome"/>
    <property type="evidence" value="ECO:0000250"/>
    <property type="project" value="UniProtKB"/>
</dbReference>
<dbReference type="GO" id="GO:0051015">
    <property type="term" value="F:actin filament binding"/>
    <property type="evidence" value="ECO:0000250"/>
    <property type="project" value="UniProtKB"/>
</dbReference>
<dbReference type="GO" id="GO:0051301">
    <property type="term" value="P:cell division"/>
    <property type="evidence" value="ECO:0007669"/>
    <property type="project" value="UniProtKB-KW"/>
</dbReference>
<dbReference type="GO" id="GO:0016477">
    <property type="term" value="P:cell migration"/>
    <property type="evidence" value="ECO:0000250"/>
    <property type="project" value="UniProtKB"/>
</dbReference>
<dbReference type="GO" id="GO:0051660">
    <property type="term" value="P:establishment of centrosome localization"/>
    <property type="evidence" value="ECO:0000250"/>
    <property type="project" value="UniProtKB"/>
</dbReference>
<dbReference type="GO" id="GO:0000132">
    <property type="term" value="P:establishment of mitotic spindle orientation"/>
    <property type="evidence" value="ECO:0000250"/>
    <property type="project" value="UniProtKB"/>
</dbReference>
<dbReference type="GO" id="GO:0090307">
    <property type="term" value="P:mitotic spindle assembly"/>
    <property type="evidence" value="ECO:0000250"/>
    <property type="project" value="UniProtKB"/>
</dbReference>
<dbReference type="GO" id="GO:0051640">
    <property type="term" value="P:organelle localization"/>
    <property type="evidence" value="ECO:0000250"/>
    <property type="project" value="UniProtKB"/>
</dbReference>
<dbReference type="GO" id="GO:1904776">
    <property type="term" value="P:regulation of protein localization to cell cortex"/>
    <property type="evidence" value="ECO:0000250"/>
    <property type="project" value="UniProtKB"/>
</dbReference>
<dbReference type="InterPro" id="IPR029304">
    <property type="entry name" value="AKAP2_C"/>
</dbReference>
<dbReference type="InterPro" id="IPR042779">
    <property type="entry name" value="MISP/MISP3-like"/>
</dbReference>
<dbReference type="PANTHER" id="PTHR18839:SF3">
    <property type="entry name" value="MITOTIC INTERACTOR AND SUBSTRATE OF PLK1"/>
    <property type="match status" value="1"/>
</dbReference>
<dbReference type="PANTHER" id="PTHR18839">
    <property type="entry name" value="MITOTIC INTERACTOR AND SUBSTRATE OF PLK1 MISP FAMILY MEMBER"/>
    <property type="match status" value="1"/>
</dbReference>
<dbReference type="Pfam" id="PF15304">
    <property type="entry name" value="AKAP2_C"/>
    <property type="match status" value="1"/>
</dbReference>
<comment type="function">
    <text evidence="1">Plays a role in mitotic spindle orientation and mitotic progression. Regulates the distribution of dynactin at the cell cortex in a PLK1-dependent manner, thus stabilizing cortical and astral microtubule attachments required for proper mitotic spindle positioning. May link microtubules to the actin cytospkeleton and focal adhesions. May be required for directed cell migration and centrosome orientation. May also be necessary for proper stacking of the Golgi apparatus (By similarity).</text>
</comment>
<comment type="subunit">
    <text evidence="1">Associates with F-actin. Interacts with DCTN1; this interaction regulates DCTN1 distribution at the cell cortex. Interacts with PTK2/FAK and MAPRE1 (By similarity).</text>
</comment>
<comment type="subcellular location">
    <subcellularLocation>
        <location evidence="1">Cell junction</location>
        <location evidence="1">Focal adhesion</location>
    </subcellularLocation>
    <subcellularLocation>
        <location evidence="1">Cytoplasm</location>
        <location evidence="1">Cytoskeleton</location>
    </subcellularLocation>
    <subcellularLocation>
        <location evidence="1">Cytoplasm</location>
        <location evidence="1">Cell cortex</location>
    </subcellularLocation>
    <text evidence="1">Predominantly localizes to cortical actin structures during interphase and mitosis. Present in retraction fibers, which are formed at former adhesion sites during mitosis, and at spicular membrane protrusions in re-attaching cytokinetic cells. Partially colocalizes with cytoplasmic F-actin. Not detected at microtubules at interphase, nor at spindle during mitosis (By similarity).</text>
</comment>
<comment type="PTM">
    <text evidence="1">Phosphorylated by CDK1 and PLK1. CDK1 is the priming kinase for PLK1 phosphorylation. Phosphorylation by PLK1 is required for proper spindle orientation at metaphase (By similarity).</text>
</comment>
<comment type="similarity">
    <text evidence="5">Belongs to the MISP family.</text>
</comment>
<gene>
    <name evidence="2" type="primary">MISP</name>
</gene>